<gene>
    <name evidence="6" type="primary">Pcdha10</name>
</gene>
<proteinExistence type="evidence at transcript level"/>
<sequence>MSCVAMKYCHESWCLLLSLLLFAIWEPGSGQLRYSVPEEAKHGTFVGRIAQDLGLELTELVPRLFRVASKDRGDLLEVNLQNGILFVNSRIDREELCGRSAECSIHLEVIVDRPLQVFHVEVEVRDINDNPPVFPTTEKNLFVSESRALDPHFSLEGASDADIGTNALLTYRLSPSEYFSLEVPTTDELVKPLQLVLKKPLDRERASELHLVVKATDGGKPELTGTLELHITVLDANDNAPAFDRAIYRVKLVENARNGTVVIRLNASDLDEGSNGQILYSFAADVSPKTEATFHIDSVSGEIKVNGKIDFEETNLWKIQAEAVDKGSPPMFGHCTILIEVLDINDNAPKIIVTSLSLPVQEDAPVGTVIALISVMDPDSTVNGQVTCSLSPHVPFKLVSTFKNYYSLVLDSALDRETTADYKVVVTARDGGSPALWATASVSVEVADVNDNAPAFAQSEYTVFVKENNPPGVHVFTVLAMDADAQENALVSYSLVERRVGERLLSSYVSVHAESGKVFALQPLDHEELELLQFQVTAKDAGVPALGSNVTLQVFVLDENDNAPTLLPHGAVGAGGAVSELVPRSVGSGHVVAKVRAVDADSGYNAWLSYELQFRAGSVRSPFRVGLYTGEISITRALDEADAPRQRLLVLVKDHGEPALTATATVLVSLVESNQAPKASSRVLGPAASESSVVDVNVYLIIAICAVSSLLVLTLVLYTALRCSALPTEVTCGPGKPMLVCSSAVGSWSYSQQRRQRVCSGEGPPKTDLMAFSPSVPPGLGSGDSGVQQEIFENPRQPNPDWRYSASLRAGMHSSVHLEEAGILRAGPGGPDQQWPTVSSATPEPEAGEVSPPVGAGVNSNSWTFKYGPGNPKQSGPGELPDKFIIPGSPAIISIRQEPANNQIDKSDFITFGKKEETKKKKKKKKGNKTQEKKEKGNSTTDNSDQ</sequence>
<keyword id="KW-0106">Calcium</keyword>
<keyword id="KW-0130">Cell adhesion</keyword>
<keyword id="KW-1003">Cell membrane</keyword>
<keyword id="KW-0325">Glycoprotein</keyword>
<keyword id="KW-0472">Membrane</keyword>
<keyword id="KW-1185">Reference proteome</keyword>
<keyword id="KW-0677">Repeat</keyword>
<keyword id="KW-0732">Signal</keyword>
<keyword id="KW-0812">Transmembrane</keyword>
<keyword id="KW-1133">Transmembrane helix</keyword>
<reference key="1">
    <citation type="journal article" date="2001" name="Genome Res.">
        <title>Comparative DNA sequence analysis of mouse and human protocadherin gene clusters.</title>
        <authorList>
            <person name="Wu Q."/>
            <person name="Zhang T."/>
            <person name="Cheng J.-F."/>
            <person name="Kim Y."/>
            <person name="Grimwood J."/>
            <person name="Schmutz J."/>
            <person name="Dickson M."/>
            <person name="Noonan J.P."/>
            <person name="Zhang M.Q."/>
            <person name="Myers R.M."/>
            <person name="Maniatis T."/>
        </authorList>
    </citation>
    <scope>NUCLEOTIDE SEQUENCE [MRNA]</scope>
    <source>
        <tissue>Brain</tissue>
    </source>
</reference>
<reference key="2">
    <citation type="journal article" date="2009" name="PLoS Biol.">
        <title>Lineage-specific biology revealed by a finished genome assembly of the mouse.</title>
        <authorList>
            <person name="Church D.M."/>
            <person name="Goodstadt L."/>
            <person name="Hillier L.W."/>
            <person name="Zody M.C."/>
            <person name="Goldstein S."/>
            <person name="She X."/>
            <person name="Bult C.J."/>
            <person name="Agarwala R."/>
            <person name="Cherry J.L."/>
            <person name="DiCuccio M."/>
            <person name="Hlavina W."/>
            <person name="Kapustin Y."/>
            <person name="Meric P."/>
            <person name="Maglott D."/>
            <person name="Birtle Z."/>
            <person name="Marques A.C."/>
            <person name="Graves T."/>
            <person name="Zhou S."/>
            <person name="Teague B."/>
            <person name="Potamousis K."/>
            <person name="Churas C."/>
            <person name="Place M."/>
            <person name="Herschleb J."/>
            <person name="Runnheim R."/>
            <person name="Forrest D."/>
            <person name="Amos-Landgraf J."/>
            <person name="Schwartz D.C."/>
            <person name="Cheng Z."/>
            <person name="Lindblad-Toh K."/>
            <person name="Eichler E.E."/>
            <person name="Ponting C.P."/>
        </authorList>
    </citation>
    <scope>NUCLEOTIDE SEQUENCE [LARGE SCALE GENOMIC DNA]</scope>
    <source>
        <strain>C57BL/6J</strain>
    </source>
</reference>
<comment type="function">
    <text evidence="4">Potential calcium-dependent cell-adhesion protein. May be involved in the establishment and maintenance of specific neuronal connections in the brain.</text>
</comment>
<comment type="subcellular location">
    <subcellularLocation>
        <location evidence="4">Cell membrane</location>
        <topology evidence="4">Single-pass type I membrane protein</topology>
    </subcellularLocation>
</comment>
<comment type="miscellaneous">
    <text evidence="4">The protocadherins alpha are expressed from a single gene cluster similarly to immunoglobulin and T-cell receptors. The N-terminal region containing the 6 extracellular cadherin domains, unique to each protocadherin alpha, is encoded by one of the large exons found in tandem array within the gene cluster. The C-terminal region, identical to all protocadherins alpha, is encoded by 3 shared exons.</text>
</comment>
<feature type="signal peptide" evidence="1">
    <location>
        <begin position="1"/>
        <end position="30"/>
    </location>
</feature>
<feature type="chain" id="PRO_0000431485" description="Protocadherin alpha-10" evidence="1">
    <location>
        <begin position="31"/>
        <end position="946"/>
    </location>
</feature>
<feature type="topological domain" description="Extracellular" evidence="5">
    <location>
        <begin position="31"/>
        <end position="697"/>
    </location>
</feature>
<feature type="transmembrane region" description="Helical" evidence="1">
    <location>
        <begin position="698"/>
        <end position="718"/>
    </location>
</feature>
<feature type="topological domain" description="Cytoplasmic" evidence="5">
    <location>
        <begin position="719"/>
        <end position="946"/>
    </location>
</feature>
<feature type="domain" description="Cadherin 1" evidence="2">
    <location>
        <begin position="31"/>
        <end position="134"/>
    </location>
</feature>
<feature type="domain" description="Cadherin 2" evidence="2">
    <location>
        <begin position="135"/>
        <end position="243"/>
    </location>
</feature>
<feature type="domain" description="Cadherin 3" evidence="2">
    <location>
        <begin position="244"/>
        <end position="351"/>
    </location>
</feature>
<feature type="domain" description="Cadherin 4" evidence="2">
    <location>
        <begin position="352"/>
        <end position="456"/>
    </location>
</feature>
<feature type="domain" description="Cadherin 5" evidence="2">
    <location>
        <begin position="457"/>
        <end position="566"/>
    </location>
</feature>
<feature type="domain" description="Cadherin 6" evidence="2">
    <location>
        <begin position="582"/>
        <end position="679"/>
    </location>
</feature>
<feature type="repeat" description="PXXP 1">
    <location>
        <begin position="734"/>
        <end position="737"/>
    </location>
</feature>
<feature type="repeat" description="PXXP 2">
    <location>
        <begin position="774"/>
        <end position="777"/>
    </location>
</feature>
<feature type="repeat" description="PXXP 3">
    <location>
        <begin position="795"/>
        <end position="798"/>
    </location>
</feature>
<feature type="repeat" description="PXXP 4">
    <location>
        <begin position="828"/>
        <end position="831"/>
    </location>
</feature>
<feature type="repeat" description="PXXP 5">
    <location>
        <begin position="869"/>
        <end position="872"/>
    </location>
</feature>
<feature type="repeat" description="PXXP 6">
    <location>
        <begin position="887"/>
        <end position="890"/>
    </location>
</feature>
<feature type="region of interest" description="6 X 4 AA repeats of P-X-X-P">
    <location>
        <begin position="734"/>
        <end position="890"/>
    </location>
</feature>
<feature type="region of interest" description="Disordered" evidence="3">
    <location>
        <begin position="826"/>
        <end position="852"/>
    </location>
</feature>
<feature type="region of interest" description="Disordered" evidence="3">
    <location>
        <begin position="865"/>
        <end position="946"/>
    </location>
</feature>
<feature type="compositionally biased region" description="Basic and acidic residues" evidence="3">
    <location>
        <begin position="905"/>
        <end position="919"/>
    </location>
</feature>
<feature type="glycosylation site" description="N-linked (GlcNAc...) asparagine" evidence="1">
    <location>
        <position position="258"/>
    </location>
</feature>
<feature type="glycosylation site" description="N-linked (GlcNAc...) asparagine" evidence="1">
    <location>
        <position position="549"/>
    </location>
</feature>
<accession>Q91Y20</accession>
<organism>
    <name type="scientific">Mus musculus</name>
    <name type="common">Mouse</name>
    <dbReference type="NCBI Taxonomy" id="10090"/>
    <lineage>
        <taxon>Eukaryota</taxon>
        <taxon>Metazoa</taxon>
        <taxon>Chordata</taxon>
        <taxon>Craniata</taxon>
        <taxon>Vertebrata</taxon>
        <taxon>Euteleostomi</taxon>
        <taxon>Mammalia</taxon>
        <taxon>Eutheria</taxon>
        <taxon>Euarchontoglires</taxon>
        <taxon>Glires</taxon>
        <taxon>Rodentia</taxon>
        <taxon>Myomorpha</taxon>
        <taxon>Muroidea</taxon>
        <taxon>Muridae</taxon>
        <taxon>Murinae</taxon>
        <taxon>Mus</taxon>
        <taxon>Mus</taxon>
    </lineage>
</organism>
<name>PCDAA_MOUSE</name>
<evidence type="ECO:0000255" key="1"/>
<evidence type="ECO:0000255" key="2">
    <source>
        <dbReference type="PROSITE-ProRule" id="PRU00043"/>
    </source>
</evidence>
<evidence type="ECO:0000256" key="3">
    <source>
        <dbReference type="SAM" id="MobiDB-lite"/>
    </source>
</evidence>
<evidence type="ECO:0000303" key="4">
    <source>
    </source>
</evidence>
<evidence type="ECO:0000305" key="5"/>
<evidence type="ECO:0000312" key="6">
    <source>
        <dbReference type="EMBL" id="AAK26046.1"/>
    </source>
</evidence>
<dbReference type="EMBL" id="AY013757">
    <property type="protein sequence ID" value="AAK26046.1"/>
    <property type="molecule type" value="mRNA"/>
</dbReference>
<dbReference type="EMBL" id="AC020968">
    <property type="status" value="NOT_ANNOTATED_CDS"/>
    <property type="molecule type" value="Genomic_DNA"/>
</dbReference>
<dbReference type="EMBL" id="AC020972">
    <property type="status" value="NOT_ANNOTATED_CDS"/>
    <property type="molecule type" value="Genomic_DNA"/>
</dbReference>
<dbReference type="EMBL" id="AC020973">
    <property type="status" value="NOT_ANNOTATED_CDS"/>
    <property type="molecule type" value="Genomic_DNA"/>
</dbReference>
<dbReference type="CCDS" id="CCDS37778.1"/>
<dbReference type="RefSeq" id="NP_034091.1">
    <property type="nucleotide sequence ID" value="NM_009961.1"/>
</dbReference>
<dbReference type="SMR" id="Q91Y20"/>
<dbReference type="FunCoup" id="Q91Y20">
    <property type="interactions" value="440"/>
</dbReference>
<dbReference type="IntAct" id="Q91Y20">
    <property type="interactions" value="1"/>
</dbReference>
<dbReference type="MINT" id="Q91Y20"/>
<dbReference type="GlyCosmos" id="Q91Y20">
    <property type="glycosylation" value="2 sites, No reported glycans"/>
</dbReference>
<dbReference type="GlyGen" id="Q91Y20">
    <property type="glycosylation" value="2 sites, 1 N-linked glycan (1 site)"/>
</dbReference>
<dbReference type="iPTMnet" id="Q91Y20"/>
<dbReference type="PhosphoSitePlus" id="Q91Y20"/>
<dbReference type="ProteomicsDB" id="289323"/>
<dbReference type="DNASU" id="12943"/>
<dbReference type="Ensembl" id="ENSMUST00000115658.6">
    <property type="protein sequence ID" value="ENSMUSP00000111322.4"/>
    <property type="gene ID" value="ENSMUSG00000007440.11"/>
</dbReference>
<dbReference type="GeneID" id="12943"/>
<dbReference type="KEGG" id="mmu:12943"/>
<dbReference type="UCSC" id="uc008epf.2">
    <property type="organism name" value="mouse"/>
</dbReference>
<dbReference type="AGR" id="MGI:1298408"/>
<dbReference type="CTD" id="56139"/>
<dbReference type="MGI" id="MGI:1298408">
    <property type="gene designation" value="Pcdha10"/>
</dbReference>
<dbReference type="VEuPathDB" id="HostDB:ENSMUSG00000007440"/>
<dbReference type="GeneTree" id="ENSGT00940000163846"/>
<dbReference type="HOGENOM" id="CLU_006480_0_0_1"/>
<dbReference type="InParanoid" id="Q91Y20"/>
<dbReference type="OMA" id="KLWKIQV"/>
<dbReference type="OrthoDB" id="59876at9989"/>
<dbReference type="BioGRID-ORCS" id="12943">
    <property type="hits" value="3 hits in 39 CRISPR screens"/>
</dbReference>
<dbReference type="CD-CODE" id="CE726F99">
    <property type="entry name" value="Postsynaptic density"/>
</dbReference>
<dbReference type="PRO" id="PR:Q91Y20"/>
<dbReference type="Proteomes" id="UP000000589">
    <property type="component" value="Chromosome 18"/>
</dbReference>
<dbReference type="RNAct" id="Q91Y20">
    <property type="molecule type" value="protein"/>
</dbReference>
<dbReference type="Bgee" id="ENSMUSG00000007440">
    <property type="expression patterns" value="Expressed in ileal epithelium and 34 other cell types or tissues"/>
</dbReference>
<dbReference type="GO" id="GO:0016020">
    <property type="term" value="C:membrane"/>
    <property type="evidence" value="ECO:0000314"/>
    <property type="project" value="MGI"/>
</dbReference>
<dbReference type="GO" id="GO:0005886">
    <property type="term" value="C:plasma membrane"/>
    <property type="evidence" value="ECO:0007669"/>
    <property type="project" value="UniProtKB-SubCell"/>
</dbReference>
<dbReference type="GO" id="GO:0005509">
    <property type="term" value="F:calcium ion binding"/>
    <property type="evidence" value="ECO:0007669"/>
    <property type="project" value="InterPro"/>
</dbReference>
<dbReference type="GO" id="GO:0007156">
    <property type="term" value="P:homophilic cell adhesion via plasma membrane adhesion molecules"/>
    <property type="evidence" value="ECO:0007669"/>
    <property type="project" value="InterPro"/>
</dbReference>
<dbReference type="CDD" id="cd11304">
    <property type="entry name" value="Cadherin_repeat"/>
    <property type="match status" value="6"/>
</dbReference>
<dbReference type="FunFam" id="2.60.40.60:FF:000001">
    <property type="entry name" value="Protocadherin alpha 2"/>
    <property type="match status" value="1"/>
</dbReference>
<dbReference type="FunFam" id="2.60.40.60:FF:000002">
    <property type="entry name" value="Protocadherin alpha 2"/>
    <property type="match status" value="1"/>
</dbReference>
<dbReference type="FunFam" id="2.60.40.60:FF:000003">
    <property type="entry name" value="Protocadherin alpha 2"/>
    <property type="match status" value="1"/>
</dbReference>
<dbReference type="FunFam" id="2.60.40.60:FF:000006">
    <property type="entry name" value="Protocadherin alpha 2"/>
    <property type="match status" value="1"/>
</dbReference>
<dbReference type="FunFam" id="2.60.40.60:FF:000007">
    <property type="entry name" value="Protocadherin alpha 2"/>
    <property type="match status" value="1"/>
</dbReference>
<dbReference type="FunFam" id="2.60.40.60:FF:000076">
    <property type="entry name" value="Protocadherin alpha 2"/>
    <property type="match status" value="1"/>
</dbReference>
<dbReference type="Gene3D" id="2.60.40.60">
    <property type="entry name" value="Cadherins"/>
    <property type="match status" value="6"/>
</dbReference>
<dbReference type="InterPro" id="IPR002126">
    <property type="entry name" value="Cadherin-like_dom"/>
</dbReference>
<dbReference type="InterPro" id="IPR015919">
    <property type="entry name" value="Cadherin-like_sf"/>
</dbReference>
<dbReference type="InterPro" id="IPR031904">
    <property type="entry name" value="Cadherin_CBD"/>
</dbReference>
<dbReference type="InterPro" id="IPR020894">
    <property type="entry name" value="Cadherin_CS"/>
</dbReference>
<dbReference type="InterPro" id="IPR013164">
    <property type="entry name" value="Cadherin_N"/>
</dbReference>
<dbReference type="InterPro" id="IPR050174">
    <property type="entry name" value="Protocadherin/Cadherin-CA"/>
</dbReference>
<dbReference type="PANTHER" id="PTHR24028">
    <property type="entry name" value="CADHERIN-87A"/>
    <property type="match status" value="1"/>
</dbReference>
<dbReference type="PANTHER" id="PTHR24028:SF303">
    <property type="entry name" value="PROTOCADHERIN ALPHA-10"/>
    <property type="match status" value="1"/>
</dbReference>
<dbReference type="Pfam" id="PF00028">
    <property type="entry name" value="Cadherin"/>
    <property type="match status" value="5"/>
</dbReference>
<dbReference type="Pfam" id="PF08266">
    <property type="entry name" value="Cadherin_2"/>
    <property type="match status" value="1"/>
</dbReference>
<dbReference type="Pfam" id="PF15974">
    <property type="entry name" value="Cadherin_tail"/>
    <property type="match status" value="1"/>
</dbReference>
<dbReference type="PRINTS" id="PR00205">
    <property type="entry name" value="CADHERIN"/>
</dbReference>
<dbReference type="SMART" id="SM00112">
    <property type="entry name" value="CA"/>
    <property type="match status" value="6"/>
</dbReference>
<dbReference type="SUPFAM" id="SSF49313">
    <property type="entry name" value="Cadherin-like"/>
    <property type="match status" value="6"/>
</dbReference>
<dbReference type="PROSITE" id="PS00232">
    <property type="entry name" value="CADHERIN_1"/>
    <property type="match status" value="5"/>
</dbReference>
<dbReference type="PROSITE" id="PS50268">
    <property type="entry name" value="CADHERIN_2"/>
    <property type="match status" value="6"/>
</dbReference>
<protein>
    <recommendedName>
        <fullName evidence="6">Protocadherin alpha-10</fullName>
        <shortName>PCDH-alpha-10</shortName>
    </recommendedName>
</protein>